<reference key="1">
    <citation type="journal article" date="1997" name="J. Biol. Chem.">
        <title>cDNA cloning and expression of a novel UDP-N-acetyl-D-galactosamine:polypeptide N-acetylgalactosaminyltransferase.</title>
        <authorList>
            <person name="Hagen F.K."/>
            <person name="Ten Hagen K.G."/>
            <person name="Beres T.M."/>
            <person name="Balys M.M."/>
            <person name="VanWuyckhuyse B.C."/>
            <person name="Tabak L.A."/>
        </authorList>
    </citation>
    <scope>NUCLEOTIDE SEQUENCE [MRNA]</scope>
    <scope>FUNCTION</scope>
    <scope>CATALYTIC ACTIVITY</scope>
    <scope>PATHWAY</scope>
    <scope>TISSUE SPECIFICITY</scope>
    <source>
        <tissue>Spleen</tissue>
    </source>
</reference>
<reference key="2">
    <citation type="journal article" date="2005" name="Science">
        <title>The transcriptional landscape of the mammalian genome.</title>
        <authorList>
            <person name="Carninci P."/>
            <person name="Kasukawa T."/>
            <person name="Katayama S."/>
            <person name="Gough J."/>
            <person name="Frith M.C."/>
            <person name="Maeda N."/>
            <person name="Oyama R."/>
            <person name="Ravasi T."/>
            <person name="Lenhard B."/>
            <person name="Wells C."/>
            <person name="Kodzius R."/>
            <person name="Shimokawa K."/>
            <person name="Bajic V.B."/>
            <person name="Brenner S.E."/>
            <person name="Batalov S."/>
            <person name="Forrest A.R."/>
            <person name="Zavolan M."/>
            <person name="Davis M.J."/>
            <person name="Wilming L.G."/>
            <person name="Aidinis V."/>
            <person name="Allen J.E."/>
            <person name="Ambesi-Impiombato A."/>
            <person name="Apweiler R."/>
            <person name="Aturaliya R.N."/>
            <person name="Bailey T.L."/>
            <person name="Bansal M."/>
            <person name="Baxter L."/>
            <person name="Beisel K.W."/>
            <person name="Bersano T."/>
            <person name="Bono H."/>
            <person name="Chalk A.M."/>
            <person name="Chiu K.P."/>
            <person name="Choudhary V."/>
            <person name="Christoffels A."/>
            <person name="Clutterbuck D.R."/>
            <person name="Crowe M.L."/>
            <person name="Dalla E."/>
            <person name="Dalrymple B.P."/>
            <person name="de Bono B."/>
            <person name="Della Gatta G."/>
            <person name="di Bernardo D."/>
            <person name="Down T."/>
            <person name="Engstrom P."/>
            <person name="Fagiolini M."/>
            <person name="Faulkner G."/>
            <person name="Fletcher C.F."/>
            <person name="Fukushima T."/>
            <person name="Furuno M."/>
            <person name="Futaki S."/>
            <person name="Gariboldi M."/>
            <person name="Georgii-Hemming P."/>
            <person name="Gingeras T.R."/>
            <person name="Gojobori T."/>
            <person name="Green R.E."/>
            <person name="Gustincich S."/>
            <person name="Harbers M."/>
            <person name="Hayashi Y."/>
            <person name="Hensch T.K."/>
            <person name="Hirokawa N."/>
            <person name="Hill D."/>
            <person name="Huminiecki L."/>
            <person name="Iacono M."/>
            <person name="Ikeo K."/>
            <person name="Iwama A."/>
            <person name="Ishikawa T."/>
            <person name="Jakt M."/>
            <person name="Kanapin A."/>
            <person name="Katoh M."/>
            <person name="Kawasawa Y."/>
            <person name="Kelso J."/>
            <person name="Kitamura H."/>
            <person name="Kitano H."/>
            <person name="Kollias G."/>
            <person name="Krishnan S.P."/>
            <person name="Kruger A."/>
            <person name="Kummerfeld S.K."/>
            <person name="Kurochkin I.V."/>
            <person name="Lareau L.F."/>
            <person name="Lazarevic D."/>
            <person name="Lipovich L."/>
            <person name="Liu J."/>
            <person name="Liuni S."/>
            <person name="McWilliam S."/>
            <person name="Madan Babu M."/>
            <person name="Madera M."/>
            <person name="Marchionni L."/>
            <person name="Matsuda H."/>
            <person name="Matsuzawa S."/>
            <person name="Miki H."/>
            <person name="Mignone F."/>
            <person name="Miyake S."/>
            <person name="Morris K."/>
            <person name="Mottagui-Tabar S."/>
            <person name="Mulder N."/>
            <person name="Nakano N."/>
            <person name="Nakauchi H."/>
            <person name="Ng P."/>
            <person name="Nilsson R."/>
            <person name="Nishiguchi S."/>
            <person name="Nishikawa S."/>
            <person name="Nori F."/>
            <person name="Ohara O."/>
            <person name="Okazaki Y."/>
            <person name="Orlando V."/>
            <person name="Pang K.C."/>
            <person name="Pavan W.J."/>
            <person name="Pavesi G."/>
            <person name="Pesole G."/>
            <person name="Petrovsky N."/>
            <person name="Piazza S."/>
            <person name="Reed J."/>
            <person name="Reid J.F."/>
            <person name="Ring B.Z."/>
            <person name="Ringwald M."/>
            <person name="Rost B."/>
            <person name="Ruan Y."/>
            <person name="Salzberg S.L."/>
            <person name="Sandelin A."/>
            <person name="Schneider C."/>
            <person name="Schoenbach C."/>
            <person name="Sekiguchi K."/>
            <person name="Semple C.A."/>
            <person name="Seno S."/>
            <person name="Sessa L."/>
            <person name="Sheng Y."/>
            <person name="Shibata Y."/>
            <person name="Shimada H."/>
            <person name="Shimada K."/>
            <person name="Silva D."/>
            <person name="Sinclair B."/>
            <person name="Sperling S."/>
            <person name="Stupka E."/>
            <person name="Sugiura K."/>
            <person name="Sultana R."/>
            <person name="Takenaka Y."/>
            <person name="Taki K."/>
            <person name="Tammoja K."/>
            <person name="Tan S.L."/>
            <person name="Tang S."/>
            <person name="Taylor M.S."/>
            <person name="Tegner J."/>
            <person name="Teichmann S.A."/>
            <person name="Ueda H.R."/>
            <person name="van Nimwegen E."/>
            <person name="Verardo R."/>
            <person name="Wei C.L."/>
            <person name="Yagi K."/>
            <person name="Yamanishi H."/>
            <person name="Zabarovsky E."/>
            <person name="Zhu S."/>
            <person name="Zimmer A."/>
            <person name="Hide W."/>
            <person name="Bult C."/>
            <person name="Grimmond S.M."/>
            <person name="Teasdale R.D."/>
            <person name="Liu E.T."/>
            <person name="Brusic V."/>
            <person name="Quackenbush J."/>
            <person name="Wahlestedt C."/>
            <person name="Mattick J.S."/>
            <person name="Hume D.A."/>
            <person name="Kai C."/>
            <person name="Sasaki D."/>
            <person name="Tomaru Y."/>
            <person name="Fukuda S."/>
            <person name="Kanamori-Katayama M."/>
            <person name="Suzuki M."/>
            <person name="Aoki J."/>
            <person name="Arakawa T."/>
            <person name="Iida J."/>
            <person name="Imamura K."/>
            <person name="Itoh M."/>
            <person name="Kato T."/>
            <person name="Kawaji H."/>
            <person name="Kawagashira N."/>
            <person name="Kawashima T."/>
            <person name="Kojima M."/>
            <person name="Kondo S."/>
            <person name="Konno H."/>
            <person name="Nakano K."/>
            <person name="Ninomiya N."/>
            <person name="Nishio T."/>
            <person name="Okada M."/>
            <person name="Plessy C."/>
            <person name="Shibata K."/>
            <person name="Shiraki T."/>
            <person name="Suzuki S."/>
            <person name="Tagami M."/>
            <person name="Waki K."/>
            <person name="Watahiki A."/>
            <person name="Okamura-Oho Y."/>
            <person name="Suzuki H."/>
            <person name="Kawai J."/>
            <person name="Hayashizaki Y."/>
        </authorList>
    </citation>
    <scope>NUCLEOTIDE SEQUENCE [LARGE SCALE MRNA]</scope>
    <source>
        <strain>C57BL/6J</strain>
        <tissue>Bone marrow</tissue>
        <tissue>Colon</tissue>
    </source>
</reference>
<reference key="3">
    <citation type="journal article" date="2004" name="Genome Res.">
        <title>The status, quality, and expansion of the NIH full-length cDNA project: the Mammalian Gene Collection (MGC).</title>
        <authorList>
            <consortium name="The MGC Project Team"/>
        </authorList>
    </citation>
    <scope>NUCLEOTIDE SEQUENCE [LARGE SCALE MRNA]</scope>
    <source>
        <strain>NMRI</strain>
        <tissue>Mammary tumor</tissue>
    </source>
</reference>
<feature type="chain" id="PRO_0000059109" description="Polypeptide N-acetylgalactosaminyltransferase 4">
    <location>
        <begin position="1"/>
        <end position="578"/>
    </location>
</feature>
<feature type="topological domain" description="Cytoplasmic" evidence="4">
    <location>
        <begin position="1"/>
        <end position="12"/>
    </location>
</feature>
<feature type="transmembrane region" description="Helical; Signal-anchor for type II membrane protein" evidence="4">
    <location>
        <begin position="13"/>
        <end position="35"/>
    </location>
</feature>
<feature type="topological domain" description="Lumenal" evidence="4">
    <location>
        <begin position="36"/>
        <end position="578"/>
    </location>
</feature>
<feature type="domain" description="Ricin B-type lectin" evidence="5">
    <location>
        <begin position="444"/>
        <end position="577"/>
    </location>
</feature>
<feature type="region of interest" description="Catalytic subdomain A">
    <location>
        <begin position="134"/>
        <end position="243"/>
    </location>
</feature>
<feature type="region of interest" description="Catalytic subdomain B">
    <location>
        <begin position="303"/>
        <end position="365"/>
    </location>
</feature>
<feature type="binding site" evidence="2">
    <location>
        <position position="175"/>
    </location>
    <ligand>
        <name>substrate</name>
    </ligand>
</feature>
<feature type="binding site" evidence="2">
    <location>
        <position position="204"/>
    </location>
    <ligand>
        <name>substrate</name>
    </ligand>
</feature>
<feature type="binding site" evidence="2">
    <location>
        <position position="227"/>
    </location>
    <ligand>
        <name>Mn(2+)</name>
        <dbReference type="ChEBI" id="CHEBI:29035"/>
    </ligand>
</feature>
<feature type="binding site" evidence="2">
    <location>
        <position position="229"/>
    </location>
    <ligand>
        <name>Mn(2+)</name>
        <dbReference type="ChEBI" id="CHEBI:29035"/>
    </ligand>
</feature>
<feature type="binding site" evidence="2">
    <location>
        <position position="334"/>
    </location>
    <ligand>
        <name>substrate</name>
    </ligand>
</feature>
<feature type="binding site" evidence="2">
    <location>
        <position position="362"/>
    </location>
    <ligand>
        <name>Mn(2+)</name>
        <dbReference type="ChEBI" id="CHEBI:29035"/>
    </ligand>
</feature>
<feature type="binding site" evidence="2">
    <location>
        <position position="370"/>
    </location>
    <ligand>
        <name>substrate</name>
    </ligand>
</feature>
<feature type="site" description="Interaction with glycopeptide substrate" evidence="3">
    <location>
        <position position="459"/>
    </location>
</feature>
<feature type="site" description="Interaction with glycopeptide substrate" evidence="3">
    <location>
        <position position="478"/>
    </location>
</feature>
<feature type="site" description="Interaction with glycopeptide substrate" evidence="3">
    <location>
        <position position="483"/>
    </location>
</feature>
<feature type="glycosylation site" description="N-linked (GlcNAc...) asparagine" evidence="4">
    <location>
        <position position="471"/>
    </location>
</feature>
<feature type="disulfide bond" evidence="5">
    <location>
        <begin position="124"/>
        <end position="357"/>
    </location>
</feature>
<feature type="disulfide bond" evidence="5">
    <location>
        <begin position="348"/>
        <end position="421"/>
    </location>
</feature>
<feature type="disulfide bond" evidence="5">
    <location>
        <begin position="457"/>
        <end position="477"/>
    </location>
</feature>
<feature type="disulfide bond" evidence="5">
    <location>
        <begin position="503"/>
        <end position="518"/>
    </location>
</feature>
<feature type="disulfide bond" evidence="5">
    <location>
        <begin position="547"/>
        <end position="565"/>
    </location>
</feature>
<gene>
    <name type="primary">Galnt4</name>
</gene>
<dbReference type="EC" id="2.4.1.41" evidence="6"/>
<dbReference type="EMBL" id="U73819">
    <property type="protein sequence ID" value="AAB58301.1"/>
    <property type="molecule type" value="mRNA"/>
</dbReference>
<dbReference type="EMBL" id="AK033494">
    <property type="protein sequence ID" value="BAC28317.1"/>
    <property type="molecule type" value="mRNA"/>
</dbReference>
<dbReference type="EMBL" id="AK148036">
    <property type="protein sequence ID" value="BAE28303.1"/>
    <property type="molecule type" value="mRNA"/>
</dbReference>
<dbReference type="EMBL" id="AK153253">
    <property type="protein sequence ID" value="BAE31844.1"/>
    <property type="molecule type" value="mRNA"/>
</dbReference>
<dbReference type="EMBL" id="BC057882">
    <property type="protein sequence ID" value="AAH57882.1"/>
    <property type="molecule type" value="mRNA"/>
</dbReference>
<dbReference type="CCDS" id="CCDS48679.1"/>
<dbReference type="RefSeq" id="NP_056552.1">
    <property type="nucleotide sequence ID" value="NM_015737.4"/>
</dbReference>
<dbReference type="SMR" id="O08832"/>
<dbReference type="FunCoup" id="O08832">
    <property type="interactions" value="489"/>
</dbReference>
<dbReference type="STRING" id="10090.ENSMUSP00000125315"/>
<dbReference type="CAZy" id="CBM13">
    <property type="family name" value="Carbohydrate-Binding Module Family 13"/>
</dbReference>
<dbReference type="CAZy" id="GT27">
    <property type="family name" value="Glycosyltransferase Family 27"/>
</dbReference>
<dbReference type="GlyCosmos" id="O08832">
    <property type="glycosylation" value="1 site, No reported glycans"/>
</dbReference>
<dbReference type="GlyGen" id="O08832">
    <property type="glycosylation" value="1 site"/>
</dbReference>
<dbReference type="iPTMnet" id="O08832"/>
<dbReference type="PhosphoSitePlus" id="O08832"/>
<dbReference type="SwissPalm" id="O08832"/>
<dbReference type="jPOST" id="O08832"/>
<dbReference type="PaxDb" id="10090-ENSMUSP00000125315"/>
<dbReference type="PeptideAtlas" id="O08832"/>
<dbReference type="ProteomicsDB" id="268842"/>
<dbReference type="Pumba" id="O08832"/>
<dbReference type="DNASU" id="14426"/>
<dbReference type="Ensembl" id="ENSMUST00000161240.4">
    <property type="protein sequence ID" value="ENSMUSP00000125315.3"/>
    <property type="gene ID" value="ENSMUSG00000090035.4"/>
</dbReference>
<dbReference type="GeneID" id="14426"/>
<dbReference type="KEGG" id="mmu:14426"/>
<dbReference type="UCSC" id="uc007gxj.2">
    <property type="organism name" value="mouse"/>
</dbReference>
<dbReference type="AGR" id="MGI:894692"/>
<dbReference type="CTD" id="8693"/>
<dbReference type="MGI" id="MGI:894692">
    <property type="gene designation" value="Galnt4"/>
</dbReference>
<dbReference type="VEuPathDB" id="HostDB:ENSMUSG00000090035"/>
<dbReference type="eggNOG" id="KOG3736">
    <property type="taxonomic scope" value="Eukaryota"/>
</dbReference>
<dbReference type="GeneTree" id="ENSGT00940000163607"/>
<dbReference type="HOGENOM" id="CLU_013477_0_1_1"/>
<dbReference type="InParanoid" id="O08832"/>
<dbReference type="OMA" id="DWNNFEF"/>
<dbReference type="OrthoDB" id="416652at2759"/>
<dbReference type="PhylomeDB" id="O08832"/>
<dbReference type="TreeFam" id="TF352660"/>
<dbReference type="BRENDA" id="2.4.1.41">
    <property type="organism ID" value="3474"/>
</dbReference>
<dbReference type="Reactome" id="R-MMU-913709">
    <property type="pathway name" value="O-linked glycosylation of mucins"/>
</dbReference>
<dbReference type="UniPathway" id="UPA00378"/>
<dbReference type="BioGRID-ORCS" id="14426">
    <property type="hits" value="1 hit in 75 CRISPR screens"/>
</dbReference>
<dbReference type="PRO" id="PR:O08832"/>
<dbReference type="Proteomes" id="UP000000589">
    <property type="component" value="Chromosome 10"/>
</dbReference>
<dbReference type="RNAct" id="O08832">
    <property type="molecule type" value="protein"/>
</dbReference>
<dbReference type="Bgee" id="ENSMUSG00000090035">
    <property type="expression patterns" value="Expressed in right colon and 224 other cell types or tissues"/>
</dbReference>
<dbReference type="GO" id="GO:0000139">
    <property type="term" value="C:Golgi membrane"/>
    <property type="evidence" value="ECO:0007669"/>
    <property type="project" value="UniProtKB-SubCell"/>
</dbReference>
<dbReference type="GO" id="GO:0048471">
    <property type="term" value="C:perinuclear region of cytoplasm"/>
    <property type="evidence" value="ECO:0007669"/>
    <property type="project" value="Ensembl"/>
</dbReference>
<dbReference type="GO" id="GO:0030246">
    <property type="term" value="F:carbohydrate binding"/>
    <property type="evidence" value="ECO:0007669"/>
    <property type="project" value="UniProtKB-KW"/>
</dbReference>
<dbReference type="GO" id="GO:0030145">
    <property type="term" value="F:manganese ion binding"/>
    <property type="evidence" value="ECO:0000250"/>
    <property type="project" value="UniProtKB"/>
</dbReference>
<dbReference type="GO" id="GO:0004653">
    <property type="term" value="F:polypeptide N-acetylgalactosaminyltransferase activity"/>
    <property type="evidence" value="ECO:0000250"/>
    <property type="project" value="UniProtKB"/>
</dbReference>
<dbReference type="GO" id="GO:0018242">
    <property type="term" value="P:protein O-linked glycosylation via serine"/>
    <property type="evidence" value="ECO:0000250"/>
    <property type="project" value="UniProtKB"/>
</dbReference>
<dbReference type="GO" id="GO:0018243">
    <property type="term" value="P:protein O-linked glycosylation via threonine"/>
    <property type="evidence" value="ECO:0000250"/>
    <property type="project" value="UniProtKB"/>
</dbReference>
<dbReference type="CDD" id="cd02510">
    <property type="entry name" value="pp-GalNAc-T"/>
    <property type="match status" value="1"/>
</dbReference>
<dbReference type="FunFam" id="2.80.10.50:FF:000054">
    <property type="entry name" value="Polypeptide N-acetylgalactosaminyltransferase"/>
    <property type="match status" value="1"/>
</dbReference>
<dbReference type="FunFam" id="3.90.550.10:FF:000021">
    <property type="entry name" value="Polypeptide N-acetylgalactosaminyltransferase"/>
    <property type="match status" value="1"/>
</dbReference>
<dbReference type="Gene3D" id="2.80.10.50">
    <property type="match status" value="1"/>
</dbReference>
<dbReference type="Gene3D" id="3.90.550.10">
    <property type="entry name" value="Spore Coat Polysaccharide Biosynthesis Protein SpsA, Chain A"/>
    <property type="match status" value="1"/>
</dbReference>
<dbReference type="InterPro" id="IPR045885">
    <property type="entry name" value="GalNAc-T"/>
</dbReference>
<dbReference type="InterPro" id="IPR001173">
    <property type="entry name" value="Glyco_trans_2-like"/>
</dbReference>
<dbReference type="InterPro" id="IPR029044">
    <property type="entry name" value="Nucleotide-diphossugar_trans"/>
</dbReference>
<dbReference type="InterPro" id="IPR035992">
    <property type="entry name" value="Ricin_B-like_lectins"/>
</dbReference>
<dbReference type="InterPro" id="IPR000772">
    <property type="entry name" value="Ricin_B_lectin"/>
</dbReference>
<dbReference type="PANTHER" id="PTHR11675">
    <property type="entry name" value="N-ACETYLGALACTOSAMINYLTRANSFERASE"/>
    <property type="match status" value="1"/>
</dbReference>
<dbReference type="PANTHER" id="PTHR11675:SF7">
    <property type="entry name" value="POLYPEPTIDE N-ACETYLGALACTOSAMINYLTRANSFERASE 4"/>
    <property type="match status" value="1"/>
</dbReference>
<dbReference type="Pfam" id="PF00535">
    <property type="entry name" value="Glycos_transf_2"/>
    <property type="match status" value="1"/>
</dbReference>
<dbReference type="Pfam" id="PF00652">
    <property type="entry name" value="Ricin_B_lectin"/>
    <property type="match status" value="1"/>
</dbReference>
<dbReference type="SMART" id="SM00458">
    <property type="entry name" value="RICIN"/>
    <property type="match status" value="1"/>
</dbReference>
<dbReference type="SUPFAM" id="SSF53448">
    <property type="entry name" value="Nucleotide-diphospho-sugar transferases"/>
    <property type="match status" value="1"/>
</dbReference>
<dbReference type="SUPFAM" id="SSF50370">
    <property type="entry name" value="Ricin B-like lectins"/>
    <property type="match status" value="1"/>
</dbReference>
<dbReference type="PROSITE" id="PS50231">
    <property type="entry name" value="RICIN_B_LECTIN"/>
    <property type="match status" value="1"/>
</dbReference>
<name>GALT4_MOUSE</name>
<protein>
    <recommendedName>
        <fullName>Polypeptide N-acetylgalactosaminyltransferase 4</fullName>
        <ecNumber evidence="6">2.4.1.41</ecNumber>
    </recommendedName>
    <alternativeName>
        <fullName>Polypeptide GalNAc transferase 4</fullName>
        <shortName>GalNAc-T4</shortName>
        <shortName>pp-GaNTase 4</shortName>
    </alternativeName>
    <alternativeName>
        <fullName>Protein-UDP acetylgalactosaminyltransferase 4</fullName>
    </alternativeName>
    <alternativeName>
        <fullName>UDP-GalNAc:polypeptide N-acetylgalactosaminyltransferase 4</fullName>
    </alternativeName>
</protein>
<organism>
    <name type="scientific">Mus musculus</name>
    <name type="common">Mouse</name>
    <dbReference type="NCBI Taxonomy" id="10090"/>
    <lineage>
        <taxon>Eukaryota</taxon>
        <taxon>Metazoa</taxon>
        <taxon>Chordata</taxon>
        <taxon>Craniata</taxon>
        <taxon>Vertebrata</taxon>
        <taxon>Euteleostomi</taxon>
        <taxon>Mammalia</taxon>
        <taxon>Eutheria</taxon>
        <taxon>Euarchontoglires</taxon>
        <taxon>Glires</taxon>
        <taxon>Rodentia</taxon>
        <taxon>Myomorpha</taxon>
        <taxon>Muroidea</taxon>
        <taxon>Muridae</taxon>
        <taxon>Murinae</taxon>
        <taxon>Mus</taxon>
        <taxon>Mus</taxon>
    </lineage>
</organism>
<sequence length="578" mass="66555">MAVRWTWAGKSCLLLALLTLAYILVEFSVSTLYASPGAGGARELGPRRLPDLDTREEDLSQPLYIKPPADSHALGEWGRASKLQLNEGELKQQEELIERYAINIYLSDRISLHRHIEDKRMYECKAKKFHYRSLPTTSVIIAFYNEAWSTLLRTIHSVLETSPAVLLKEIILVDDLSDRIYLKAQLETYISNLERVRLIRTNKREGLVRARLIGATFATGDVLTFLDCHCECNTGWLEPLLERISRDETAIVCPVIDTIDWNTFEFYMQTGEPMIGGFDWRLTFQWHSVPKHERDRRTSRIDPIRSPTMAGGLFAVSKKYFQYLGTYDTGMEVWGGENLELSFRVWQCGGKLEIHPCSHVGHVFPKRAPYARPNFLQNTARAAEVWMDEYKEHFYNRNPPARKEAYGDLSERKLLRERLKCKSFDWYLKNVFSNLHVPEDRPGWHGAIRSMGISSECLDYNAPDNNPTGANLSLFGCHGQGGNQFFEYTSNKEIRFNSVTELCAEVPQQKDYVGMQNCPKDGLPVPVNIIWHFKEDGTIFHPHTRLCLSAYRTAEGRPSVHMKTCDALDKNQLWRFEK</sequence>
<evidence type="ECO:0000250" key="1"/>
<evidence type="ECO:0000250" key="2">
    <source>
        <dbReference type="UniProtKB" id="Q10471"/>
    </source>
</evidence>
<evidence type="ECO:0000250" key="3">
    <source>
        <dbReference type="UniProtKB" id="Q8N4A0"/>
    </source>
</evidence>
<evidence type="ECO:0000255" key="4"/>
<evidence type="ECO:0000255" key="5">
    <source>
        <dbReference type="PROSITE-ProRule" id="PRU00174"/>
    </source>
</evidence>
<evidence type="ECO:0000269" key="6">
    <source>
    </source>
</evidence>
<evidence type="ECO:0000305" key="7"/>
<accession>O08832</accession>
<accession>Q3U681</accession>
<comment type="function">
    <text evidence="6">Catalyzes the initial reaction in O-linked oligosaccharide biosynthesis, the transfer of an N-acetyl-D-galactosamine residue to a serine or threonine residue on the protein receptor. Has a highest activity toward EA2 peptide substrate and a much lower activity with EPO-T, Muc2, Muc1a, Muc1b.</text>
</comment>
<comment type="catalytic activity">
    <reaction evidence="6">
        <text>L-seryl-[protein] + UDP-N-acetyl-alpha-D-galactosamine = a 3-O-[N-acetyl-alpha-D-galactosaminyl]-L-seryl-[protein] + UDP + H(+)</text>
        <dbReference type="Rhea" id="RHEA:23956"/>
        <dbReference type="Rhea" id="RHEA-COMP:9863"/>
        <dbReference type="Rhea" id="RHEA-COMP:12788"/>
        <dbReference type="ChEBI" id="CHEBI:15378"/>
        <dbReference type="ChEBI" id="CHEBI:29999"/>
        <dbReference type="ChEBI" id="CHEBI:53604"/>
        <dbReference type="ChEBI" id="CHEBI:58223"/>
        <dbReference type="ChEBI" id="CHEBI:67138"/>
        <dbReference type="EC" id="2.4.1.41"/>
    </reaction>
</comment>
<comment type="catalytic activity">
    <reaction evidence="6">
        <text>L-threonyl-[protein] + UDP-N-acetyl-alpha-D-galactosamine = a 3-O-[N-acetyl-alpha-D-galactosaminyl]-L-threonyl-[protein] + UDP + H(+)</text>
        <dbReference type="Rhea" id="RHEA:52424"/>
        <dbReference type="Rhea" id="RHEA-COMP:11060"/>
        <dbReference type="Rhea" id="RHEA-COMP:11689"/>
        <dbReference type="ChEBI" id="CHEBI:15378"/>
        <dbReference type="ChEBI" id="CHEBI:30013"/>
        <dbReference type="ChEBI" id="CHEBI:58223"/>
        <dbReference type="ChEBI" id="CHEBI:67138"/>
        <dbReference type="ChEBI" id="CHEBI:87075"/>
        <dbReference type="EC" id="2.4.1.41"/>
    </reaction>
</comment>
<comment type="cofactor">
    <cofactor evidence="3">
        <name>Mn(2+)</name>
        <dbReference type="ChEBI" id="CHEBI:29035"/>
    </cofactor>
</comment>
<comment type="pathway">
    <text evidence="6">Protein modification; protein glycosylation.</text>
</comment>
<comment type="subcellular location">
    <subcellularLocation>
        <location evidence="1">Golgi apparatus membrane</location>
        <topology evidence="1">Single-pass type II membrane protein</topology>
    </subcellularLocation>
</comment>
<comment type="tissue specificity">
    <text evidence="6">Highly expressed in sublingual gland, stomach, colon, small intestine and cervix. Expressed at intermediate levels in kidney, ovary, lung and uterus. Weakly expressed in spleen, liver, heart and brain. Not expressed in submandibular and parotid glands, skeletal muscle and testis.</text>
</comment>
<comment type="domain">
    <text evidence="1">There are two conserved domains in the glycosyltransferase region: the N-terminal domain (domain A, also called GT1 motif), which is probably involved in manganese coordination and substrate binding and the C-terminal domain (domain B, also called Gal/GalNAc-T motif), which is probably involved in catalytic reaction and UDP-Gal binding.</text>
</comment>
<comment type="domain">
    <text evidence="3">The ricin B-type lectin domain directs the glycopeptide specificity. It is required in the glycopeptide specificity of enzyme activity but not for activity with naked peptide substrates, suggesting that it triggers the catalytic domain to act on GalNAc-glycopeptide substrates.</text>
</comment>
<comment type="similarity">
    <text evidence="7">Belongs to the glycosyltransferase 2 family. GalNAc-T subfamily.</text>
</comment>
<comment type="online information" name="Functional Glycomics Gateway - GTase">
    <link uri="http://www.functionalglycomics.org/glycomics/molecule/jsp/glycoEnzyme/viewGlycoEnzyme.jsp?gbpId=gt_mou_513"/>
    <text>Polypeptide N-acetylgalactosaminyltransferase 4</text>
</comment>
<keyword id="KW-1015">Disulfide bond</keyword>
<keyword id="KW-0325">Glycoprotein</keyword>
<keyword id="KW-0328">Glycosyltransferase</keyword>
<keyword id="KW-0333">Golgi apparatus</keyword>
<keyword id="KW-0430">Lectin</keyword>
<keyword id="KW-0464">Manganese</keyword>
<keyword id="KW-0472">Membrane</keyword>
<keyword id="KW-0479">Metal-binding</keyword>
<keyword id="KW-1185">Reference proteome</keyword>
<keyword id="KW-0735">Signal-anchor</keyword>
<keyword id="KW-0808">Transferase</keyword>
<keyword id="KW-0812">Transmembrane</keyword>
<keyword id="KW-1133">Transmembrane helix</keyword>
<proteinExistence type="evidence at protein level"/>